<proteinExistence type="evidence at transcript level"/>
<evidence type="ECO:0000255" key="1"/>
<evidence type="ECO:0000269" key="2">
    <source>
    </source>
</evidence>
<evidence type="ECO:0000303" key="3">
    <source>
    </source>
</evidence>
<evidence type="ECO:0000305" key="4"/>
<evidence type="ECO:0000305" key="5">
    <source>
    </source>
</evidence>
<keyword id="KW-1035">Host cytoplasm</keyword>
<keyword id="KW-1048">Host nucleus</keyword>
<keyword id="KW-1185">Reference proteome</keyword>
<keyword id="KW-0964">Secreted</keyword>
<keyword id="KW-0732">Signal</keyword>
<keyword id="KW-0843">Virulence</keyword>
<feature type="signal peptide" evidence="1">
    <location>
        <begin position="1"/>
        <end position="24"/>
    </location>
</feature>
<feature type="chain" id="PRO_5006059287" description="Secreted RxLR effector protein RXLR-C251">
    <location>
        <begin position="25"/>
        <end position="122"/>
    </location>
</feature>
<feature type="short sequence motif" description="RxLR" evidence="5">
    <location>
        <begin position="48"/>
        <end position="51"/>
    </location>
</feature>
<protein>
    <recommendedName>
        <fullName evidence="3">Secreted RxLR effector protein RXLR-C251</fullName>
    </recommendedName>
</protein>
<accession>A0A0P1B8W9</accession>
<comment type="function">
    <text evidence="2">Secreted effector that does not suppress pattern-triggered immunity (PTI) in plant host.</text>
</comment>
<comment type="subcellular location">
    <subcellularLocation>
        <location evidence="2">Secreted</location>
    </subcellularLocation>
    <subcellularLocation>
        <location evidence="2">Host cytoplasm</location>
    </subcellularLocation>
    <subcellularLocation>
        <location evidence="2">Host nucleus</location>
    </subcellularLocation>
</comment>
<comment type="induction">
    <text evidence="2">Expression is up-regulated in spores.</text>
</comment>
<comment type="domain">
    <text evidence="5">Has the canonical translocation RxLR motif, but lacks the canonical EER motif, which characterizes most oomycete effectors identified so far.</text>
</comment>
<comment type="similarity">
    <text evidence="4">Belongs to the RxLR effector family.</text>
</comment>
<reference key="1">
    <citation type="journal article" date="2015" name="BMC Genomics">
        <title>Genome analyses of the sunflower pathogen Plasmopara halstedii provide insights into effector evolution in downy mildews and Phytophthora.</title>
        <authorList>
            <person name="Sharma R."/>
            <person name="Xia X."/>
            <person name="Cano L.M."/>
            <person name="Evangelisti E."/>
            <person name="Kemen E."/>
            <person name="Judelson H."/>
            <person name="Oome S."/>
            <person name="Sambles C."/>
            <person name="van den Hoogen D.J."/>
            <person name="Kitner M."/>
            <person name="Klein J."/>
            <person name="Meijer H.J."/>
            <person name="Spring O."/>
            <person name="Win J."/>
            <person name="Zipper R."/>
            <person name="Bode H.B."/>
            <person name="Govers F."/>
            <person name="Kamoun S."/>
            <person name="Schornack S."/>
            <person name="Studholme D.J."/>
            <person name="Van den Ackerveken G."/>
            <person name="Thines M."/>
        </authorList>
    </citation>
    <scope>NUCLEOTIDE SEQUENCE [LARGE SCALE GENOMIC DNA]</scope>
</reference>
<reference key="2">
    <citation type="journal article" date="2019" name="Plant J.">
        <title>Sunflower resistance to multiple downy mildew pathotypes revealed by recognition of conserved effectors of the oomycete Plasmopara halstedii.</title>
        <authorList>
            <person name="Pecrix Y."/>
            <person name="Buendia L."/>
            <person name="Penouilh-Suzette C."/>
            <person name="Marechaux M."/>
            <person name="Legrand L."/>
            <person name="Bouchez O."/>
            <person name="Rengel D."/>
            <person name="Gouzy J."/>
            <person name="Cottret L."/>
            <person name="Vear F."/>
            <person name="Godiard L."/>
        </authorList>
    </citation>
    <scope>DOMAIN</scope>
    <scope>INDUCTION</scope>
    <scope>FUNCTION</scope>
    <scope>SUBCELLULAR LOCATION</scope>
</reference>
<organism>
    <name type="scientific">Plasmopara halstedii</name>
    <name type="common">Downy mildew of sunflower</name>
    <dbReference type="NCBI Taxonomy" id="4781"/>
    <lineage>
        <taxon>Eukaryota</taxon>
        <taxon>Sar</taxon>
        <taxon>Stramenopiles</taxon>
        <taxon>Oomycota</taxon>
        <taxon>Peronosporales</taxon>
        <taxon>Peronosporaceae</taxon>
        <taxon>Plasmopara</taxon>
    </lineage>
</organism>
<gene>
    <name evidence="3" type="primary">RXLR-C25</name>
</gene>
<dbReference type="EMBL" id="CCYD01000116">
    <property type="protein sequence ID" value="CEG50476.1"/>
    <property type="molecule type" value="Genomic_DNA"/>
</dbReference>
<dbReference type="EnsemblProtists" id="CEG50476">
    <property type="protein sequence ID" value="CEG50476"/>
    <property type="gene ID" value="CEG50476"/>
</dbReference>
<dbReference type="OMA" id="YKLALMT"/>
<dbReference type="OrthoDB" id="126647at2759"/>
<dbReference type="Proteomes" id="UP000054928">
    <property type="component" value="Unassembled WGS sequence"/>
</dbReference>
<dbReference type="GO" id="GO:0005576">
    <property type="term" value="C:extracellular region"/>
    <property type="evidence" value="ECO:0007669"/>
    <property type="project" value="UniProtKB-SubCell"/>
</dbReference>
<dbReference type="GO" id="GO:0030430">
    <property type="term" value="C:host cell cytoplasm"/>
    <property type="evidence" value="ECO:0007669"/>
    <property type="project" value="UniProtKB-SubCell"/>
</dbReference>
<dbReference type="GO" id="GO:0042025">
    <property type="term" value="C:host cell nucleus"/>
    <property type="evidence" value="ECO:0007669"/>
    <property type="project" value="UniProtKB-SubCell"/>
</dbReference>
<sequence>MRFFYKLALMTTVASLACSDTALASTDLMPFNVAETQVSTHDIVSAGRSLRAEDTSTSIDNLRDPTMKEKIQFKLWYTRGKTPGQVHRDFFEGLDESIIVNNPNYEVWKMYEAYYNNKKGND</sequence>
<name>RLR25_PLAHL</name>